<proteinExistence type="inferred from homology"/>
<comment type="function">
    <text evidence="1">Produces ATP from ADP in the presence of a proton gradient across the membrane. The gamma chain is believed to be important in regulating ATPase activity and the flow of protons through the CF(0) complex.</text>
</comment>
<comment type="subunit">
    <text evidence="1">F-type ATPases have 2 components, CF(1) - the catalytic core - and CF(0) - the membrane proton channel. CF(1) has five subunits: alpha(3), beta(3), gamma(1), delta(1), epsilon(1). CF(0) has three main subunits: a, b and c.</text>
</comment>
<comment type="subcellular location">
    <subcellularLocation>
        <location evidence="1">Cell membrane</location>
        <topology evidence="1">Peripheral membrane protein</topology>
    </subcellularLocation>
</comment>
<comment type="similarity">
    <text evidence="1">Belongs to the ATPase gamma chain family.</text>
</comment>
<name>ATPG_LACJO</name>
<dbReference type="EMBL" id="AE017198">
    <property type="protein sequence ID" value="AAS08760.1"/>
    <property type="molecule type" value="Genomic_DNA"/>
</dbReference>
<dbReference type="RefSeq" id="WP_004897608.1">
    <property type="nucleotide sequence ID" value="NC_005362.1"/>
</dbReference>
<dbReference type="SMR" id="Q74K16"/>
<dbReference type="KEGG" id="ljo:LJ_0939"/>
<dbReference type="eggNOG" id="COG0224">
    <property type="taxonomic scope" value="Bacteria"/>
</dbReference>
<dbReference type="HOGENOM" id="CLU_050669_0_1_9"/>
<dbReference type="Proteomes" id="UP000000581">
    <property type="component" value="Chromosome"/>
</dbReference>
<dbReference type="GO" id="GO:0005886">
    <property type="term" value="C:plasma membrane"/>
    <property type="evidence" value="ECO:0007669"/>
    <property type="project" value="UniProtKB-SubCell"/>
</dbReference>
<dbReference type="GO" id="GO:0045259">
    <property type="term" value="C:proton-transporting ATP synthase complex"/>
    <property type="evidence" value="ECO:0007669"/>
    <property type="project" value="UniProtKB-KW"/>
</dbReference>
<dbReference type="GO" id="GO:0005524">
    <property type="term" value="F:ATP binding"/>
    <property type="evidence" value="ECO:0007669"/>
    <property type="project" value="UniProtKB-UniRule"/>
</dbReference>
<dbReference type="GO" id="GO:0046933">
    <property type="term" value="F:proton-transporting ATP synthase activity, rotational mechanism"/>
    <property type="evidence" value="ECO:0007669"/>
    <property type="project" value="UniProtKB-UniRule"/>
</dbReference>
<dbReference type="GO" id="GO:0042777">
    <property type="term" value="P:proton motive force-driven plasma membrane ATP synthesis"/>
    <property type="evidence" value="ECO:0007669"/>
    <property type="project" value="UniProtKB-UniRule"/>
</dbReference>
<dbReference type="CDD" id="cd12151">
    <property type="entry name" value="F1-ATPase_gamma"/>
    <property type="match status" value="1"/>
</dbReference>
<dbReference type="Gene3D" id="3.40.1380.10">
    <property type="match status" value="1"/>
</dbReference>
<dbReference type="Gene3D" id="1.10.287.80">
    <property type="entry name" value="ATP synthase, gamma subunit, helix hairpin domain"/>
    <property type="match status" value="1"/>
</dbReference>
<dbReference type="HAMAP" id="MF_00815">
    <property type="entry name" value="ATP_synth_gamma_bact"/>
    <property type="match status" value="1"/>
</dbReference>
<dbReference type="InterPro" id="IPR035968">
    <property type="entry name" value="ATP_synth_F1_ATPase_gsu"/>
</dbReference>
<dbReference type="InterPro" id="IPR000131">
    <property type="entry name" value="ATP_synth_F1_gsu"/>
</dbReference>
<dbReference type="InterPro" id="IPR023632">
    <property type="entry name" value="ATP_synth_F1_gsu_CS"/>
</dbReference>
<dbReference type="NCBIfam" id="TIGR01146">
    <property type="entry name" value="ATPsyn_F1gamma"/>
    <property type="match status" value="1"/>
</dbReference>
<dbReference type="NCBIfam" id="NF004147">
    <property type="entry name" value="PRK05621.2-1"/>
    <property type="match status" value="1"/>
</dbReference>
<dbReference type="PANTHER" id="PTHR11693">
    <property type="entry name" value="ATP SYNTHASE GAMMA CHAIN"/>
    <property type="match status" value="1"/>
</dbReference>
<dbReference type="PANTHER" id="PTHR11693:SF22">
    <property type="entry name" value="ATP SYNTHASE SUBUNIT GAMMA, MITOCHONDRIAL"/>
    <property type="match status" value="1"/>
</dbReference>
<dbReference type="Pfam" id="PF00231">
    <property type="entry name" value="ATP-synt"/>
    <property type="match status" value="1"/>
</dbReference>
<dbReference type="PRINTS" id="PR00126">
    <property type="entry name" value="ATPASEGAMMA"/>
</dbReference>
<dbReference type="SUPFAM" id="SSF52943">
    <property type="entry name" value="ATP synthase (F1-ATPase), gamma subunit"/>
    <property type="match status" value="1"/>
</dbReference>
<dbReference type="PROSITE" id="PS00153">
    <property type="entry name" value="ATPASE_GAMMA"/>
    <property type="match status" value="1"/>
</dbReference>
<feature type="chain" id="PRO_0000073299" description="ATP synthase gamma chain">
    <location>
        <begin position="1"/>
        <end position="318"/>
    </location>
</feature>
<evidence type="ECO:0000255" key="1">
    <source>
        <dbReference type="HAMAP-Rule" id="MF_00815"/>
    </source>
</evidence>
<organism>
    <name type="scientific">Lactobacillus johnsonii (strain CNCM I-12250 / La1 / NCC 533)</name>
    <dbReference type="NCBI Taxonomy" id="257314"/>
    <lineage>
        <taxon>Bacteria</taxon>
        <taxon>Bacillati</taxon>
        <taxon>Bacillota</taxon>
        <taxon>Bacilli</taxon>
        <taxon>Lactobacillales</taxon>
        <taxon>Lactobacillaceae</taxon>
        <taxon>Lactobacillus</taxon>
    </lineage>
</organism>
<protein>
    <recommendedName>
        <fullName evidence="1">ATP synthase gamma chain</fullName>
    </recommendedName>
    <alternativeName>
        <fullName evidence="1">ATP synthase F1 sector gamma subunit</fullName>
    </alternativeName>
    <alternativeName>
        <fullName evidence="1">F-ATPase gamma subunit</fullName>
    </alternativeName>
</protein>
<sequence>MAESLLELKKKIASIQKTGQITEAMRMVSGVKLNRTEKLDQEYTIYNDKVRATVSHLMSSQIVNQLGKETNEYSEFSGQSNIDYSSFFDLGTLASLVQPRKEIKSTGYLVISGDRGLVGSYNSQVIKNMMSIFKDADAQNKDVKILAVGSVAAQFFKKQNLNVVYEYSGVSDVPTYNEVRDIVQTAVKMYLNGVYDELFVCYTHHVNTLTSAFRVESMLPISDIDINHKETMPKDYIIEPDIDSVLKTVLPQFAKSMIFGAILDAKTAEHASSMTAMQSASQNADDVVSGLKTKLNRARQAQITTEITEIIGGANALE</sequence>
<gene>
    <name evidence="1" type="primary">atpG</name>
    <name type="ordered locus">LJ_0939</name>
</gene>
<accession>Q74K16</accession>
<reference key="1">
    <citation type="journal article" date="2004" name="Proc. Natl. Acad. Sci. U.S.A.">
        <title>The genome sequence of the probiotic intestinal bacterium Lactobacillus johnsonii NCC 533.</title>
        <authorList>
            <person name="Pridmore R.D."/>
            <person name="Berger B."/>
            <person name="Desiere F."/>
            <person name="Vilanova D."/>
            <person name="Barretto C."/>
            <person name="Pittet A.-C."/>
            <person name="Zwahlen M.-C."/>
            <person name="Rouvet M."/>
            <person name="Altermann E."/>
            <person name="Barrangou R."/>
            <person name="Mollet B."/>
            <person name="Mercenier A."/>
            <person name="Klaenhammer T."/>
            <person name="Arigoni F."/>
            <person name="Schell M.A."/>
        </authorList>
    </citation>
    <scope>NUCLEOTIDE SEQUENCE [LARGE SCALE GENOMIC DNA]</scope>
    <source>
        <strain>CNCM I-1225 / La1 / NCC 533</strain>
    </source>
</reference>
<keyword id="KW-0066">ATP synthesis</keyword>
<keyword id="KW-1003">Cell membrane</keyword>
<keyword id="KW-0139">CF(1)</keyword>
<keyword id="KW-0375">Hydrogen ion transport</keyword>
<keyword id="KW-0406">Ion transport</keyword>
<keyword id="KW-0472">Membrane</keyword>
<keyword id="KW-0813">Transport</keyword>